<feature type="chain" id="PRO_0000358418" description="NADH-quinone oxidoreductase subunit B">
    <location>
        <begin position="1"/>
        <end position="158"/>
    </location>
</feature>
<feature type="binding site" evidence="2">
    <location>
        <position position="37"/>
    </location>
    <ligand>
        <name>[4Fe-4S] cluster</name>
        <dbReference type="ChEBI" id="CHEBI:49883"/>
    </ligand>
</feature>
<feature type="binding site" evidence="2">
    <location>
        <position position="38"/>
    </location>
    <ligand>
        <name>[4Fe-4S] cluster</name>
        <dbReference type="ChEBI" id="CHEBI:49883"/>
    </ligand>
</feature>
<feature type="binding site" evidence="2">
    <location>
        <position position="102"/>
    </location>
    <ligand>
        <name>[4Fe-4S] cluster</name>
        <dbReference type="ChEBI" id="CHEBI:49883"/>
    </ligand>
</feature>
<feature type="binding site" evidence="2">
    <location>
        <position position="132"/>
    </location>
    <ligand>
        <name>[4Fe-4S] cluster</name>
        <dbReference type="ChEBI" id="CHEBI:49883"/>
    </ligand>
</feature>
<proteinExistence type="inferred from homology"/>
<gene>
    <name evidence="2" type="primary">nuoB</name>
    <name type="ordered locus">lpp2835</name>
</gene>
<accession>Q5X1A8</accession>
<dbReference type="EC" id="7.1.1.-" evidence="2"/>
<dbReference type="EMBL" id="CR628336">
    <property type="protein sequence ID" value="CAH13988.1"/>
    <property type="molecule type" value="Genomic_DNA"/>
</dbReference>
<dbReference type="RefSeq" id="WP_010948477.1">
    <property type="nucleotide sequence ID" value="NC_006368.1"/>
</dbReference>
<dbReference type="SMR" id="Q5X1A8"/>
<dbReference type="KEGG" id="lpp:lpp2835"/>
<dbReference type="LegioList" id="lpp2835"/>
<dbReference type="HOGENOM" id="CLU_055737_7_0_6"/>
<dbReference type="GO" id="GO:0005886">
    <property type="term" value="C:plasma membrane"/>
    <property type="evidence" value="ECO:0007669"/>
    <property type="project" value="UniProtKB-SubCell"/>
</dbReference>
<dbReference type="GO" id="GO:0045271">
    <property type="term" value="C:respiratory chain complex I"/>
    <property type="evidence" value="ECO:0007669"/>
    <property type="project" value="TreeGrafter"/>
</dbReference>
<dbReference type="GO" id="GO:0051539">
    <property type="term" value="F:4 iron, 4 sulfur cluster binding"/>
    <property type="evidence" value="ECO:0007669"/>
    <property type="project" value="UniProtKB-KW"/>
</dbReference>
<dbReference type="GO" id="GO:0005506">
    <property type="term" value="F:iron ion binding"/>
    <property type="evidence" value="ECO:0007669"/>
    <property type="project" value="UniProtKB-UniRule"/>
</dbReference>
<dbReference type="GO" id="GO:0008137">
    <property type="term" value="F:NADH dehydrogenase (ubiquinone) activity"/>
    <property type="evidence" value="ECO:0007669"/>
    <property type="project" value="InterPro"/>
</dbReference>
<dbReference type="GO" id="GO:0050136">
    <property type="term" value="F:NADH:ubiquinone reductase (non-electrogenic) activity"/>
    <property type="evidence" value="ECO:0007669"/>
    <property type="project" value="UniProtKB-UniRule"/>
</dbReference>
<dbReference type="GO" id="GO:0048038">
    <property type="term" value="F:quinone binding"/>
    <property type="evidence" value="ECO:0007669"/>
    <property type="project" value="UniProtKB-KW"/>
</dbReference>
<dbReference type="GO" id="GO:0009060">
    <property type="term" value="P:aerobic respiration"/>
    <property type="evidence" value="ECO:0007669"/>
    <property type="project" value="TreeGrafter"/>
</dbReference>
<dbReference type="GO" id="GO:0015990">
    <property type="term" value="P:electron transport coupled proton transport"/>
    <property type="evidence" value="ECO:0007669"/>
    <property type="project" value="TreeGrafter"/>
</dbReference>
<dbReference type="FunFam" id="3.40.50.12280:FF:000001">
    <property type="entry name" value="NADH-quinone oxidoreductase subunit B 2"/>
    <property type="match status" value="1"/>
</dbReference>
<dbReference type="Gene3D" id="3.40.50.12280">
    <property type="match status" value="1"/>
</dbReference>
<dbReference type="HAMAP" id="MF_01356">
    <property type="entry name" value="NDH1_NuoB"/>
    <property type="match status" value="1"/>
</dbReference>
<dbReference type="InterPro" id="IPR006137">
    <property type="entry name" value="NADH_UbQ_OxRdtase-like_20kDa"/>
</dbReference>
<dbReference type="InterPro" id="IPR006138">
    <property type="entry name" value="NADH_UQ_OxRdtase_20Kd_su"/>
</dbReference>
<dbReference type="NCBIfam" id="TIGR01957">
    <property type="entry name" value="nuoB_fam"/>
    <property type="match status" value="1"/>
</dbReference>
<dbReference type="NCBIfam" id="NF005012">
    <property type="entry name" value="PRK06411.1"/>
    <property type="match status" value="1"/>
</dbReference>
<dbReference type="PANTHER" id="PTHR11995">
    <property type="entry name" value="NADH DEHYDROGENASE"/>
    <property type="match status" value="1"/>
</dbReference>
<dbReference type="PANTHER" id="PTHR11995:SF14">
    <property type="entry name" value="NADH DEHYDROGENASE [UBIQUINONE] IRON-SULFUR PROTEIN 7, MITOCHONDRIAL"/>
    <property type="match status" value="1"/>
</dbReference>
<dbReference type="Pfam" id="PF01058">
    <property type="entry name" value="Oxidored_q6"/>
    <property type="match status" value="1"/>
</dbReference>
<dbReference type="SUPFAM" id="SSF56770">
    <property type="entry name" value="HydA/Nqo6-like"/>
    <property type="match status" value="1"/>
</dbReference>
<dbReference type="PROSITE" id="PS01150">
    <property type="entry name" value="COMPLEX1_20K"/>
    <property type="match status" value="1"/>
</dbReference>
<evidence type="ECO:0000250" key="1"/>
<evidence type="ECO:0000255" key="2">
    <source>
        <dbReference type="HAMAP-Rule" id="MF_01356"/>
    </source>
</evidence>
<name>NUOB_LEGPA</name>
<reference key="1">
    <citation type="journal article" date="2004" name="Nat. Genet.">
        <title>Evidence in the Legionella pneumophila genome for exploitation of host cell functions and high genome plasticity.</title>
        <authorList>
            <person name="Cazalet C."/>
            <person name="Rusniok C."/>
            <person name="Brueggemann H."/>
            <person name="Zidane N."/>
            <person name="Magnier A."/>
            <person name="Ma L."/>
            <person name="Tichit M."/>
            <person name="Jarraud S."/>
            <person name="Bouchier C."/>
            <person name="Vandenesch F."/>
            <person name="Kunst F."/>
            <person name="Etienne J."/>
            <person name="Glaser P."/>
            <person name="Buchrieser C."/>
        </authorList>
    </citation>
    <scope>NUCLEOTIDE SEQUENCE [LARGE SCALE GENOMIC DNA]</scope>
    <source>
        <strain>Paris</strain>
    </source>
</reference>
<protein>
    <recommendedName>
        <fullName evidence="2">NADH-quinone oxidoreductase subunit B</fullName>
        <ecNumber evidence="2">7.1.1.-</ecNumber>
    </recommendedName>
    <alternativeName>
        <fullName evidence="2">NADH dehydrogenase I subunit B</fullName>
    </alternativeName>
    <alternativeName>
        <fullName evidence="2">NDH-1 subunit B</fullName>
    </alternativeName>
</protein>
<organism>
    <name type="scientific">Legionella pneumophila (strain Paris)</name>
    <dbReference type="NCBI Taxonomy" id="297246"/>
    <lineage>
        <taxon>Bacteria</taxon>
        <taxon>Pseudomonadati</taxon>
        <taxon>Pseudomonadota</taxon>
        <taxon>Gammaproteobacteria</taxon>
        <taxon>Legionellales</taxon>
        <taxon>Legionellaceae</taxon>
        <taxon>Legionella</taxon>
    </lineage>
</organism>
<comment type="function">
    <text evidence="1">NDH-1 shuttles electrons from NADH, via FMN and iron-sulfur (Fe-S) centers, to quinones in the respiratory chain. Couples the redox reaction to proton translocation (for every two electrons transferred, four hydrogen ions are translocated across the cytoplasmic membrane), and thus conserves the redox energy in a proton gradient (By similarity).</text>
</comment>
<comment type="catalytic activity">
    <reaction evidence="2">
        <text>a quinone + NADH + 5 H(+)(in) = a quinol + NAD(+) + 4 H(+)(out)</text>
        <dbReference type="Rhea" id="RHEA:57888"/>
        <dbReference type="ChEBI" id="CHEBI:15378"/>
        <dbReference type="ChEBI" id="CHEBI:24646"/>
        <dbReference type="ChEBI" id="CHEBI:57540"/>
        <dbReference type="ChEBI" id="CHEBI:57945"/>
        <dbReference type="ChEBI" id="CHEBI:132124"/>
    </reaction>
</comment>
<comment type="cofactor">
    <cofactor evidence="2">
        <name>[4Fe-4S] cluster</name>
        <dbReference type="ChEBI" id="CHEBI:49883"/>
    </cofactor>
    <text evidence="2">Binds 1 [4Fe-4S] cluster.</text>
</comment>
<comment type="subunit">
    <text evidence="2">NDH-1 is composed of 14 different subunits. Subunits NuoB, C, D, E, F, and G constitute the peripheral sector of the complex.</text>
</comment>
<comment type="subcellular location">
    <subcellularLocation>
        <location evidence="2">Cell inner membrane</location>
        <topology evidence="2">Peripheral membrane protein</topology>
        <orientation evidence="2">Cytoplasmic side</orientation>
    </subcellularLocation>
</comment>
<comment type="similarity">
    <text evidence="2">Belongs to the complex I 20 kDa subunit family.</text>
</comment>
<keyword id="KW-0004">4Fe-4S</keyword>
<keyword id="KW-0997">Cell inner membrane</keyword>
<keyword id="KW-1003">Cell membrane</keyword>
<keyword id="KW-0408">Iron</keyword>
<keyword id="KW-0411">Iron-sulfur</keyword>
<keyword id="KW-0472">Membrane</keyword>
<keyword id="KW-0479">Metal-binding</keyword>
<keyword id="KW-0520">NAD</keyword>
<keyword id="KW-0874">Quinone</keyword>
<keyword id="KW-1278">Translocase</keyword>
<keyword id="KW-0813">Transport</keyword>
<keyword id="KW-0830">Ubiquinone</keyword>
<sequence>MAVAELEKKGFELTTVEKLVGWARSGSMWPMTFGLACCAVEMMHVGAARYDLDRFGIIFRPSPRQSDVMIVAGTLCNKMAPALRKVYDQMPEPRWVISMGSCANGGGYYHYSYSVVRGCDRIVPVDVYVPGCPPTAEALLYGIIQLQNKIRRKPVLEA</sequence>